<dbReference type="EMBL" id="AE000782">
    <property type="protein sequence ID" value="AAB90034.1"/>
    <property type="molecule type" value="Genomic_DNA"/>
</dbReference>
<dbReference type="PIR" id="D69401">
    <property type="entry name" value="D69401"/>
</dbReference>
<dbReference type="RefSeq" id="WP_010878708.1">
    <property type="nucleotide sequence ID" value="NC_000917.1"/>
</dbReference>
<dbReference type="STRING" id="224325.AF_1213"/>
<dbReference type="PaxDb" id="224325-AF_1213"/>
<dbReference type="DNASU" id="1484437"/>
<dbReference type="EnsemblBacteria" id="AAB90034">
    <property type="protein sequence ID" value="AAB90034"/>
    <property type="gene ID" value="AF_1213"/>
</dbReference>
<dbReference type="KEGG" id="afu:AF_1213"/>
<dbReference type="eggNOG" id="arCOG10979">
    <property type="taxonomic scope" value="Archaea"/>
</dbReference>
<dbReference type="HOGENOM" id="CLU_1745450_0_0_2"/>
<dbReference type="Proteomes" id="UP000002199">
    <property type="component" value="Chromosome"/>
</dbReference>
<feature type="chain" id="PRO_0000127971" description="Uncharacterized protein AF_1213">
    <location>
        <begin position="1"/>
        <end position="149"/>
    </location>
</feature>
<sequence>MAGQLTFKRELEKVFEKELKKRIERIGKTPLSPLSLILFTRIAELSAIENGYIRPTEYEMREIFAARTTYSEGLLSTLKDIIYSHFLRSNLGEHLEDFIYTLQRIEDIQSKIDELILREMREVSLRKVYHELLRFLLDMLCDKDMVRFD</sequence>
<name>Y1213_ARCFU</name>
<gene>
    <name type="ordered locus">AF_1213</name>
</gene>
<protein>
    <recommendedName>
        <fullName>Uncharacterized protein AF_1213</fullName>
    </recommendedName>
</protein>
<proteinExistence type="predicted"/>
<organism>
    <name type="scientific">Archaeoglobus fulgidus (strain ATCC 49558 / DSM 4304 / JCM 9628 / NBRC 100126 / VC-16)</name>
    <dbReference type="NCBI Taxonomy" id="224325"/>
    <lineage>
        <taxon>Archaea</taxon>
        <taxon>Methanobacteriati</taxon>
        <taxon>Methanobacteriota</taxon>
        <taxon>Archaeoglobi</taxon>
        <taxon>Archaeoglobales</taxon>
        <taxon>Archaeoglobaceae</taxon>
        <taxon>Archaeoglobus</taxon>
    </lineage>
</organism>
<keyword id="KW-1185">Reference proteome</keyword>
<accession>O29055</accession>
<reference key="1">
    <citation type="journal article" date="1997" name="Nature">
        <title>The complete genome sequence of the hyperthermophilic, sulphate-reducing archaeon Archaeoglobus fulgidus.</title>
        <authorList>
            <person name="Klenk H.-P."/>
            <person name="Clayton R.A."/>
            <person name="Tomb J.-F."/>
            <person name="White O."/>
            <person name="Nelson K.E."/>
            <person name="Ketchum K.A."/>
            <person name="Dodson R.J."/>
            <person name="Gwinn M.L."/>
            <person name="Hickey E.K."/>
            <person name="Peterson J.D."/>
            <person name="Richardson D.L."/>
            <person name="Kerlavage A.R."/>
            <person name="Graham D.E."/>
            <person name="Kyrpides N.C."/>
            <person name="Fleischmann R.D."/>
            <person name="Quackenbush J."/>
            <person name="Lee N.H."/>
            <person name="Sutton G.G."/>
            <person name="Gill S.R."/>
            <person name="Kirkness E.F."/>
            <person name="Dougherty B.A."/>
            <person name="McKenney K."/>
            <person name="Adams M.D."/>
            <person name="Loftus B.J."/>
            <person name="Peterson S.N."/>
            <person name="Reich C.I."/>
            <person name="McNeil L.K."/>
            <person name="Badger J.H."/>
            <person name="Glodek A."/>
            <person name="Zhou L."/>
            <person name="Overbeek R."/>
            <person name="Gocayne J.D."/>
            <person name="Weidman J.F."/>
            <person name="McDonald L.A."/>
            <person name="Utterback T.R."/>
            <person name="Cotton M.D."/>
            <person name="Spriggs T."/>
            <person name="Artiach P."/>
            <person name="Kaine B.P."/>
            <person name="Sykes S.M."/>
            <person name="Sadow P.W."/>
            <person name="D'Andrea K.P."/>
            <person name="Bowman C."/>
            <person name="Fujii C."/>
            <person name="Garland S.A."/>
            <person name="Mason T.M."/>
            <person name="Olsen G.J."/>
            <person name="Fraser C.M."/>
            <person name="Smith H.O."/>
            <person name="Woese C.R."/>
            <person name="Venter J.C."/>
        </authorList>
    </citation>
    <scope>NUCLEOTIDE SEQUENCE [LARGE SCALE GENOMIC DNA]</scope>
    <source>
        <strain>ATCC 49558 / DSM 4304 / JCM 9628 / NBRC 100126 / VC-16</strain>
    </source>
</reference>